<reference key="1">
    <citation type="journal article" date="2002" name="Proc. Natl. Acad. Sci. U.S.A.">
        <title>Genome sequence of the hyperthermophilic crenarchaeon Pyrobaculum aerophilum.</title>
        <authorList>
            <person name="Fitz-Gibbon S.T."/>
            <person name="Ladner H."/>
            <person name="Kim U.-J."/>
            <person name="Stetter K.O."/>
            <person name="Simon M.I."/>
            <person name="Miller J.H."/>
        </authorList>
    </citation>
    <scope>NUCLEOTIDE SEQUENCE [LARGE SCALE GENOMIC DNA]</scope>
    <source>
        <strain>ATCC 51768 / DSM 7523 / JCM 9630 / CIP 104966 / NBRC 100827 / IM2</strain>
    </source>
</reference>
<gene>
    <name type="primary">rps2</name>
    <name type="ordered locus">PAE0817</name>
</gene>
<dbReference type="EMBL" id="AE009441">
    <property type="protein sequence ID" value="AAL63051.1"/>
    <property type="molecule type" value="Genomic_DNA"/>
</dbReference>
<dbReference type="RefSeq" id="WP_011007523.1">
    <property type="nucleotide sequence ID" value="NC_003364.1"/>
</dbReference>
<dbReference type="SMR" id="Q8ZYE2"/>
<dbReference type="FunCoup" id="Q8ZYE2">
    <property type="interactions" value="142"/>
</dbReference>
<dbReference type="STRING" id="178306.PAE0817"/>
<dbReference type="EnsemblBacteria" id="AAL63051">
    <property type="protein sequence ID" value="AAL63051"/>
    <property type="gene ID" value="PAE0817"/>
</dbReference>
<dbReference type="GeneID" id="1465280"/>
<dbReference type="KEGG" id="pai:PAE0817"/>
<dbReference type="PATRIC" id="fig|178306.9.peg.600"/>
<dbReference type="eggNOG" id="arCOG04245">
    <property type="taxonomic scope" value="Archaea"/>
</dbReference>
<dbReference type="HOGENOM" id="CLU_058171_3_0_2"/>
<dbReference type="InParanoid" id="Q8ZYE2"/>
<dbReference type="Proteomes" id="UP000002439">
    <property type="component" value="Chromosome"/>
</dbReference>
<dbReference type="GO" id="GO:0022627">
    <property type="term" value="C:cytosolic small ribosomal subunit"/>
    <property type="evidence" value="ECO:0000318"/>
    <property type="project" value="GO_Central"/>
</dbReference>
<dbReference type="GO" id="GO:0003735">
    <property type="term" value="F:structural constituent of ribosome"/>
    <property type="evidence" value="ECO:0000318"/>
    <property type="project" value="GO_Central"/>
</dbReference>
<dbReference type="GO" id="GO:0000028">
    <property type="term" value="P:ribosomal small subunit assembly"/>
    <property type="evidence" value="ECO:0000318"/>
    <property type="project" value="GO_Central"/>
</dbReference>
<dbReference type="GO" id="GO:0006412">
    <property type="term" value="P:translation"/>
    <property type="evidence" value="ECO:0000318"/>
    <property type="project" value="GO_Central"/>
</dbReference>
<dbReference type="CDD" id="cd01425">
    <property type="entry name" value="RPS2"/>
    <property type="match status" value="1"/>
</dbReference>
<dbReference type="FunFam" id="3.40.50.10490:FF:000030">
    <property type="entry name" value="30S ribosomal protein S2"/>
    <property type="match status" value="1"/>
</dbReference>
<dbReference type="Gene3D" id="3.40.50.10490">
    <property type="entry name" value="Glucose-6-phosphate isomerase like protein, domain 1"/>
    <property type="match status" value="1"/>
</dbReference>
<dbReference type="HAMAP" id="MF_00291_A">
    <property type="entry name" value="Ribosomal_uS2_A"/>
    <property type="match status" value="1"/>
</dbReference>
<dbReference type="InterPro" id="IPR001865">
    <property type="entry name" value="Ribosomal_uS2"/>
</dbReference>
<dbReference type="InterPro" id="IPR023454">
    <property type="entry name" value="Ribosomal_uS2_arc"/>
</dbReference>
<dbReference type="InterPro" id="IPR005707">
    <property type="entry name" value="Ribosomal_uS2_euk/arc"/>
</dbReference>
<dbReference type="InterPro" id="IPR023591">
    <property type="entry name" value="Ribosomal_uS2_flav_dom_sf"/>
</dbReference>
<dbReference type="NCBIfam" id="TIGR01012">
    <property type="entry name" value="uS2_euk_arch"/>
    <property type="match status" value="1"/>
</dbReference>
<dbReference type="PANTHER" id="PTHR11489">
    <property type="entry name" value="40S RIBOSOMAL PROTEIN SA"/>
    <property type="match status" value="1"/>
</dbReference>
<dbReference type="Pfam" id="PF00318">
    <property type="entry name" value="Ribosomal_S2"/>
    <property type="match status" value="1"/>
</dbReference>
<dbReference type="PRINTS" id="PR00395">
    <property type="entry name" value="RIBOSOMALS2"/>
</dbReference>
<dbReference type="SUPFAM" id="SSF52313">
    <property type="entry name" value="Ribosomal protein S2"/>
    <property type="match status" value="1"/>
</dbReference>
<comment type="similarity">
    <text evidence="2">Belongs to the universal ribosomal protein uS2 family.</text>
</comment>
<proteinExistence type="inferred from homology"/>
<sequence length="208" mass="23898">MTEEMQYEYLVPLEKYLSAGVRLGTRLSNKYLEDRGFIFAVRPDGLRIFDIKKIDERLKIAAKFIARYRPERVLVHTTRPYGFKPVQMFCKFVGCKALTGRFIPGTLTNPNLPHYQEVDLLFVVDPKLDAQAVAEAAKMGIPVIALVDTDTPHQYIDFMIPCNNKGRKSLALIFWILARQVLRERGELKPDQDLPVPPEEFETKLVQS</sequence>
<evidence type="ECO:0000256" key="1">
    <source>
        <dbReference type="SAM" id="MobiDB-lite"/>
    </source>
</evidence>
<evidence type="ECO:0000305" key="2"/>
<accession>Q8ZYE2</accession>
<name>RS2_PYRAE</name>
<feature type="chain" id="PRO_0000134329" description="Small ribosomal subunit protein uS2">
    <location>
        <begin position="1"/>
        <end position="208"/>
    </location>
</feature>
<feature type="region of interest" description="Disordered" evidence="1">
    <location>
        <begin position="189"/>
        <end position="208"/>
    </location>
</feature>
<protein>
    <recommendedName>
        <fullName evidence="2">Small ribosomal subunit protein uS2</fullName>
    </recommendedName>
    <alternativeName>
        <fullName>30S ribosomal protein S2</fullName>
    </alternativeName>
</protein>
<organism>
    <name type="scientific">Pyrobaculum aerophilum (strain ATCC 51768 / DSM 7523 / JCM 9630 / CIP 104966 / NBRC 100827 / IM2)</name>
    <dbReference type="NCBI Taxonomy" id="178306"/>
    <lineage>
        <taxon>Archaea</taxon>
        <taxon>Thermoproteota</taxon>
        <taxon>Thermoprotei</taxon>
        <taxon>Thermoproteales</taxon>
        <taxon>Thermoproteaceae</taxon>
        <taxon>Pyrobaculum</taxon>
    </lineage>
</organism>
<keyword id="KW-1185">Reference proteome</keyword>
<keyword id="KW-0687">Ribonucleoprotein</keyword>
<keyword id="KW-0689">Ribosomal protein</keyword>